<gene>
    <name evidence="1" type="primary">flhD</name>
    <name type="ordered locus">ECH74115_2631</name>
</gene>
<comment type="function">
    <text evidence="1">Functions in complex with FlhC as a master transcriptional regulator that regulates transcription of several flagellar and non-flagellar operons by binding to their promoter region. Activates expression of class 2 flagellar genes, including fliA, which is a flagellum-specific sigma factor that turns on the class 3 genes. Also regulates genes whose products function in a variety of physiological pathways.</text>
</comment>
<comment type="subunit">
    <text evidence="1">Homodimer; disulfide-linked. Forms a heterohexamer composed of two FlhC and four FlhD subunits. Each FlhC binds a FlhD dimer, forming a heterotrimer, and a hexamer assembles by dimerization of two heterotrimers.</text>
</comment>
<comment type="subcellular location">
    <subcellularLocation>
        <location evidence="1">Cytoplasm</location>
    </subcellularLocation>
</comment>
<comment type="domain">
    <text evidence="1">The C-terminal region contains a putative helix-turn-helix (HTH) motif, suggesting that this region may bind DNA.</text>
</comment>
<comment type="similarity">
    <text evidence="1">Belongs to the FlhD family.</text>
</comment>
<sequence length="116" mass="13301">MHTSELLKHIYDINLSYLLLAQRLIVQDKASAMFRLGINEEMATTLAALTLPQMVKLAETNQLVCHFRFDSHQTITLLTQDSRVDDLQQIHTGIMLSTRLLNDVNQPEEALRKKRA</sequence>
<keyword id="KW-0010">Activator</keyword>
<keyword id="KW-1005">Bacterial flagellum biogenesis</keyword>
<keyword id="KW-0963">Cytoplasm</keyword>
<keyword id="KW-1015">Disulfide bond</keyword>
<keyword id="KW-0238">DNA-binding</keyword>
<keyword id="KW-0804">Transcription</keyword>
<keyword id="KW-0805">Transcription regulation</keyword>
<feature type="chain" id="PRO_1000132680" description="Flagellar transcriptional regulator FlhD">
    <location>
        <begin position="1"/>
        <end position="116"/>
    </location>
</feature>
<feature type="disulfide bond" description="Interchain" evidence="1">
    <location>
        <position position="65"/>
    </location>
</feature>
<dbReference type="EMBL" id="CP001164">
    <property type="protein sequence ID" value="ACI37420.1"/>
    <property type="molecule type" value="Genomic_DNA"/>
</dbReference>
<dbReference type="RefSeq" id="WP_001302091.1">
    <property type="nucleotide sequence ID" value="NC_011353.1"/>
</dbReference>
<dbReference type="SMR" id="B5YRN8"/>
<dbReference type="KEGG" id="ecf:ECH74115_2631"/>
<dbReference type="HOGENOM" id="CLU_144160_0_0_6"/>
<dbReference type="GO" id="GO:0005737">
    <property type="term" value="C:cytoplasm"/>
    <property type="evidence" value="ECO:0007669"/>
    <property type="project" value="UniProtKB-SubCell"/>
</dbReference>
<dbReference type="GO" id="GO:0003677">
    <property type="term" value="F:DNA binding"/>
    <property type="evidence" value="ECO:0007669"/>
    <property type="project" value="UniProtKB-UniRule"/>
</dbReference>
<dbReference type="GO" id="GO:0044780">
    <property type="term" value="P:bacterial-type flagellum assembly"/>
    <property type="evidence" value="ECO:0007669"/>
    <property type="project" value="InterPro"/>
</dbReference>
<dbReference type="GO" id="GO:0045893">
    <property type="term" value="P:positive regulation of DNA-templated transcription"/>
    <property type="evidence" value="ECO:0007669"/>
    <property type="project" value="InterPro"/>
</dbReference>
<dbReference type="GO" id="GO:1902208">
    <property type="term" value="P:regulation of bacterial-type flagellum assembly"/>
    <property type="evidence" value="ECO:0007669"/>
    <property type="project" value="UniProtKB-UniRule"/>
</dbReference>
<dbReference type="FunFam" id="1.10.4000.10:FF:000001">
    <property type="entry name" value="Flagellar transcriptional regulator FlhD"/>
    <property type="match status" value="1"/>
</dbReference>
<dbReference type="Gene3D" id="1.10.4000.10">
    <property type="entry name" value="Flagellar transcriptional activator FlhD"/>
    <property type="match status" value="1"/>
</dbReference>
<dbReference type="HAMAP" id="MF_00725">
    <property type="entry name" value="FlhD"/>
    <property type="match status" value="1"/>
</dbReference>
<dbReference type="InterPro" id="IPR023559">
    <property type="entry name" value="Flagellar_FlhD"/>
</dbReference>
<dbReference type="InterPro" id="IPR036194">
    <property type="entry name" value="FlhD_sf"/>
</dbReference>
<dbReference type="NCBIfam" id="NF002783">
    <property type="entry name" value="PRK02909.1-1"/>
    <property type="match status" value="1"/>
</dbReference>
<dbReference type="Pfam" id="PF05247">
    <property type="entry name" value="FlhD"/>
    <property type="match status" value="1"/>
</dbReference>
<dbReference type="SUPFAM" id="SSF63592">
    <property type="entry name" value="Flagellar transcriptional activator FlhD"/>
    <property type="match status" value="1"/>
</dbReference>
<protein>
    <recommendedName>
        <fullName evidence="1">Flagellar transcriptional regulator FlhD</fullName>
    </recommendedName>
</protein>
<reference key="1">
    <citation type="journal article" date="2011" name="Proc. Natl. Acad. Sci. U.S.A.">
        <title>Genomic anatomy of Escherichia coli O157:H7 outbreaks.</title>
        <authorList>
            <person name="Eppinger M."/>
            <person name="Mammel M.K."/>
            <person name="Leclerc J.E."/>
            <person name="Ravel J."/>
            <person name="Cebula T.A."/>
        </authorList>
    </citation>
    <scope>NUCLEOTIDE SEQUENCE [LARGE SCALE GENOMIC DNA]</scope>
    <source>
        <strain>EC4115 / EHEC</strain>
    </source>
</reference>
<organism>
    <name type="scientific">Escherichia coli O157:H7 (strain EC4115 / EHEC)</name>
    <dbReference type="NCBI Taxonomy" id="444450"/>
    <lineage>
        <taxon>Bacteria</taxon>
        <taxon>Pseudomonadati</taxon>
        <taxon>Pseudomonadota</taxon>
        <taxon>Gammaproteobacteria</taxon>
        <taxon>Enterobacterales</taxon>
        <taxon>Enterobacteriaceae</taxon>
        <taxon>Escherichia</taxon>
    </lineage>
</organism>
<evidence type="ECO:0000255" key="1">
    <source>
        <dbReference type="HAMAP-Rule" id="MF_00725"/>
    </source>
</evidence>
<proteinExistence type="inferred from homology"/>
<name>FLHD_ECO5E</name>
<accession>B5YRN8</accession>